<gene>
    <name type="primary">SMU1</name>
    <name type="synonym">STE20</name>
    <name type="ORF">UMAG_12272</name>
</gene>
<dbReference type="EC" id="2.7.11.1"/>
<dbReference type="EMBL" id="AF299352">
    <property type="protein sequence ID" value="AAM97788.1"/>
    <property type="molecule type" value="Genomic_DNA"/>
</dbReference>
<dbReference type="EMBL" id="CM003152">
    <property type="protein sequence ID" value="KIS67485.1"/>
    <property type="status" value="ALT_INIT"/>
    <property type="molecule type" value="Genomic_DNA"/>
</dbReference>
<dbReference type="RefSeq" id="XP_011391020.1">
    <property type="nucleotide sequence ID" value="XM_011392718.1"/>
</dbReference>
<dbReference type="SMR" id="Q4P5N0"/>
<dbReference type="FunCoup" id="Q4P5N0">
    <property type="interactions" value="327"/>
</dbReference>
<dbReference type="STRING" id="237631.Q4P5N0"/>
<dbReference type="EnsemblFungi" id="KIS67485">
    <property type="protein sequence ID" value="KIS67485"/>
    <property type="gene ID" value="UMAG_12272"/>
</dbReference>
<dbReference type="GeneID" id="23568019"/>
<dbReference type="KEGG" id="uma:UMAG_12272"/>
<dbReference type="eggNOG" id="KOG0578">
    <property type="taxonomic scope" value="Eukaryota"/>
</dbReference>
<dbReference type="HOGENOM" id="CLU_000288_26_4_1"/>
<dbReference type="InParanoid" id="Q4P5N0"/>
<dbReference type="OMA" id="KKGMFTF"/>
<dbReference type="OrthoDB" id="248923at2759"/>
<dbReference type="PHI-base" id="PHI:2233"/>
<dbReference type="PHI-base" id="PHI:382"/>
<dbReference type="Proteomes" id="UP000000561">
    <property type="component" value="Chromosome 13"/>
</dbReference>
<dbReference type="GO" id="GO:0005737">
    <property type="term" value="C:cytoplasm"/>
    <property type="evidence" value="ECO:0000318"/>
    <property type="project" value="GO_Central"/>
</dbReference>
<dbReference type="GO" id="GO:0005634">
    <property type="term" value="C:nucleus"/>
    <property type="evidence" value="ECO:0007669"/>
    <property type="project" value="UniProtKB-SubCell"/>
</dbReference>
<dbReference type="GO" id="GO:0005524">
    <property type="term" value="F:ATP binding"/>
    <property type="evidence" value="ECO:0007669"/>
    <property type="project" value="UniProtKB-KW"/>
</dbReference>
<dbReference type="GO" id="GO:0106310">
    <property type="term" value="F:protein serine kinase activity"/>
    <property type="evidence" value="ECO:0007669"/>
    <property type="project" value="RHEA"/>
</dbReference>
<dbReference type="GO" id="GO:0004674">
    <property type="term" value="F:protein serine/threonine kinase activity"/>
    <property type="evidence" value="ECO:0000318"/>
    <property type="project" value="GO_Central"/>
</dbReference>
<dbReference type="GO" id="GO:0009267">
    <property type="term" value="P:cellular response to starvation"/>
    <property type="evidence" value="ECO:0000318"/>
    <property type="project" value="GO_Central"/>
</dbReference>
<dbReference type="GO" id="GO:0035556">
    <property type="term" value="P:intracellular signal transduction"/>
    <property type="evidence" value="ECO:0000318"/>
    <property type="project" value="GO_Central"/>
</dbReference>
<dbReference type="GO" id="GO:0043408">
    <property type="term" value="P:regulation of MAPK cascade"/>
    <property type="evidence" value="ECO:0000318"/>
    <property type="project" value="GO_Central"/>
</dbReference>
<dbReference type="GO" id="GO:0019236">
    <property type="term" value="P:response to pheromone"/>
    <property type="evidence" value="ECO:0007669"/>
    <property type="project" value="UniProtKB-KW"/>
</dbReference>
<dbReference type="CDD" id="cd01093">
    <property type="entry name" value="CRIB_PAK_like"/>
    <property type="match status" value="1"/>
</dbReference>
<dbReference type="CDD" id="cd06614">
    <property type="entry name" value="STKc_PAK"/>
    <property type="match status" value="1"/>
</dbReference>
<dbReference type="FunFam" id="1.10.510.10:FF:000011">
    <property type="entry name" value="Non-specific serine/threonine protein kinase"/>
    <property type="match status" value="1"/>
</dbReference>
<dbReference type="FunFam" id="3.30.200.20:FF:000385">
    <property type="entry name" value="Non-specific serine/threonine protein kinase"/>
    <property type="match status" value="1"/>
</dbReference>
<dbReference type="FunFam" id="3.90.810.10:FF:000007">
    <property type="entry name" value="Non-specific serine/threonine protein kinase"/>
    <property type="match status" value="1"/>
</dbReference>
<dbReference type="Gene3D" id="3.90.810.10">
    <property type="entry name" value="CRIB domain"/>
    <property type="match status" value="1"/>
</dbReference>
<dbReference type="Gene3D" id="3.30.200.20">
    <property type="entry name" value="Phosphorylase Kinase, domain 1"/>
    <property type="match status" value="1"/>
</dbReference>
<dbReference type="Gene3D" id="1.10.510.10">
    <property type="entry name" value="Transferase(Phosphotransferase) domain 1"/>
    <property type="match status" value="1"/>
</dbReference>
<dbReference type="InterPro" id="IPR000095">
    <property type="entry name" value="CRIB_dom"/>
</dbReference>
<dbReference type="InterPro" id="IPR036936">
    <property type="entry name" value="CRIB_dom_sf"/>
</dbReference>
<dbReference type="InterPro" id="IPR011009">
    <property type="entry name" value="Kinase-like_dom_sf"/>
</dbReference>
<dbReference type="InterPro" id="IPR051931">
    <property type="entry name" value="PAK3-like"/>
</dbReference>
<dbReference type="InterPro" id="IPR033923">
    <property type="entry name" value="PAK_BD"/>
</dbReference>
<dbReference type="InterPro" id="IPR000719">
    <property type="entry name" value="Prot_kinase_dom"/>
</dbReference>
<dbReference type="InterPro" id="IPR017441">
    <property type="entry name" value="Protein_kinase_ATP_BS"/>
</dbReference>
<dbReference type="InterPro" id="IPR008271">
    <property type="entry name" value="Ser/Thr_kinase_AS"/>
</dbReference>
<dbReference type="PANTHER" id="PTHR45832">
    <property type="entry name" value="SERINE/THREONINE-PROTEIN KINASE SAMKA-RELATED-RELATED"/>
    <property type="match status" value="1"/>
</dbReference>
<dbReference type="PANTHER" id="PTHR45832:SF22">
    <property type="entry name" value="SERINE_THREONINE-PROTEIN KINASE SAMKA-RELATED"/>
    <property type="match status" value="1"/>
</dbReference>
<dbReference type="Pfam" id="PF00786">
    <property type="entry name" value="PBD"/>
    <property type="match status" value="1"/>
</dbReference>
<dbReference type="Pfam" id="PF00069">
    <property type="entry name" value="Pkinase"/>
    <property type="match status" value="1"/>
</dbReference>
<dbReference type="SMART" id="SM00285">
    <property type="entry name" value="PBD"/>
    <property type="match status" value="1"/>
</dbReference>
<dbReference type="SMART" id="SM00220">
    <property type="entry name" value="S_TKc"/>
    <property type="match status" value="1"/>
</dbReference>
<dbReference type="SUPFAM" id="SSF56112">
    <property type="entry name" value="Protein kinase-like (PK-like)"/>
    <property type="match status" value="1"/>
</dbReference>
<dbReference type="PROSITE" id="PS50108">
    <property type="entry name" value="CRIB"/>
    <property type="match status" value="1"/>
</dbReference>
<dbReference type="PROSITE" id="PS00107">
    <property type="entry name" value="PROTEIN_KINASE_ATP"/>
    <property type="match status" value="1"/>
</dbReference>
<dbReference type="PROSITE" id="PS50011">
    <property type="entry name" value="PROTEIN_KINASE_DOM"/>
    <property type="match status" value="1"/>
</dbReference>
<dbReference type="PROSITE" id="PS00108">
    <property type="entry name" value="PROTEIN_KINASE_ST"/>
    <property type="match status" value="1"/>
</dbReference>
<organism>
    <name type="scientific">Mycosarcoma maydis</name>
    <name type="common">Corn smut fungus</name>
    <name type="synonym">Ustilago maydis</name>
    <dbReference type="NCBI Taxonomy" id="5270"/>
    <lineage>
        <taxon>Eukaryota</taxon>
        <taxon>Fungi</taxon>
        <taxon>Dikarya</taxon>
        <taxon>Basidiomycota</taxon>
        <taxon>Ustilaginomycotina</taxon>
        <taxon>Ustilaginomycetes</taxon>
        <taxon>Ustilaginales</taxon>
        <taxon>Ustilaginaceae</taxon>
        <taxon>Mycosarcoma</taxon>
    </lineage>
</organism>
<sequence>MSLVPQRSAPPPPSSSANRAASSLAFQPASTSNSASPTSSSTSTFANGSSSSTTAYRPQPTINTSVSALQGPRSGLPAQTGLAFSVSSLSNNPPAASPITAPSSALPWSSQNPAASGSTATFPPRPVRSNTAGPDTLHTISSVSASQTVAPVMVQRSHSSIAAHQASPSLNQSSPTLDADGPASLTTQSHFVHPSRDRERSRDGTTTPGSRNTFKSVFGGFVNSMSDVFSAQKKIEISTPYDPVHLTHVGFNSDTGEFTGLPKEWQQLLQESGISRQDQEANPQAVIDIVAFYQDATQSQGGSDVWKKMGAAKGNKAPATPRTDTSSEDGIYRVAPQPVLYEKPRTAPAPPGITHPNRPSEFGSPDLRQPPSNASTSSADTALRPSRSTPAPGAAPPPNAKTTSSSNPPPCKPSPASRAPDAPAAVSAASKNAKGPGSVPRRRETKKSTIKDSEVIAKLQAICTDADPTKLYRSLQKIGQGASGGVFTAYQVGTNVSVAIKQMNLEQQPKKDLIINEILVMKESRHRNIVNFIDSFLFKGDLWVVMEYMEGGSLTDVVTCNIMTEGQIAAVSREVLEGLRHLHQHGVIHRDIKSDNVLLSLQGDIKLTDFGFCAQIGESQAKRTTMVGTPYWMAPEVVTRKEYGPKVDIWSLGIMCIEMVEGEPPYLNENPLRALYLIATNGTPKINNPENLSNTFKDFLTTSLDVDAERRPDALGMLAHPFLKRSESLRTLTPLIKAAREQTRKS</sequence>
<feature type="chain" id="PRO_0000237635" description="Serine/threonine-protein kinase SMU1">
    <location>
        <begin position="1"/>
        <end position="746"/>
    </location>
</feature>
<feature type="domain" description="CRIB" evidence="2">
    <location>
        <begin position="237"/>
        <end position="250"/>
    </location>
</feature>
<feature type="domain" description="Protein kinase" evidence="3">
    <location>
        <begin position="472"/>
        <end position="723"/>
    </location>
</feature>
<feature type="region of interest" description="Disordered" evidence="5">
    <location>
        <begin position="1"/>
        <end position="138"/>
    </location>
</feature>
<feature type="region of interest" description="Disordered" evidence="5">
    <location>
        <begin position="155"/>
        <end position="212"/>
    </location>
</feature>
<feature type="region of interest" description="Disordered" evidence="5">
    <location>
        <begin position="301"/>
        <end position="451"/>
    </location>
</feature>
<feature type="compositionally biased region" description="Low complexity" evidence="5">
    <location>
        <begin position="15"/>
        <end position="54"/>
    </location>
</feature>
<feature type="compositionally biased region" description="Low complexity" evidence="5">
    <location>
        <begin position="85"/>
        <end position="105"/>
    </location>
</feature>
<feature type="compositionally biased region" description="Polar residues" evidence="5">
    <location>
        <begin position="106"/>
        <end position="121"/>
    </location>
</feature>
<feature type="compositionally biased region" description="Polar residues" evidence="5">
    <location>
        <begin position="128"/>
        <end position="138"/>
    </location>
</feature>
<feature type="compositionally biased region" description="Polar residues" evidence="5">
    <location>
        <begin position="156"/>
        <end position="176"/>
    </location>
</feature>
<feature type="compositionally biased region" description="Basic and acidic residues" evidence="5">
    <location>
        <begin position="194"/>
        <end position="203"/>
    </location>
</feature>
<feature type="compositionally biased region" description="Polar residues" evidence="5">
    <location>
        <begin position="370"/>
        <end position="380"/>
    </location>
</feature>
<feature type="compositionally biased region" description="Low complexity" evidence="5">
    <location>
        <begin position="414"/>
        <end position="430"/>
    </location>
</feature>
<feature type="active site" description="Proton acceptor" evidence="3 4">
    <location>
        <position position="591"/>
    </location>
</feature>
<feature type="binding site" evidence="3">
    <location>
        <begin position="478"/>
        <end position="486"/>
    </location>
    <ligand>
        <name>ATP</name>
        <dbReference type="ChEBI" id="CHEBI:30616"/>
    </ligand>
</feature>
<feature type="binding site" evidence="3">
    <location>
        <position position="501"/>
    </location>
    <ligand>
        <name>ATP</name>
        <dbReference type="ChEBI" id="CHEBI:30616"/>
    </ligand>
</feature>
<evidence type="ECO:0000250" key="1"/>
<evidence type="ECO:0000255" key="2">
    <source>
        <dbReference type="PROSITE-ProRule" id="PRU00057"/>
    </source>
</evidence>
<evidence type="ECO:0000255" key="3">
    <source>
        <dbReference type="PROSITE-ProRule" id="PRU00159"/>
    </source>
</evidence>
<evidence type="ECO:0000255" key="4">
    <source>
        <dbReference type="PROSITE-ProRule" id="PRU10027"/>
    </source>
</evidence>
<evidence type="ECO:0000256" key="5">
    <source>
        <dbReference type="SAM" id="MobiDB-lite"/>
    </source>
</evidence>
<evidence type="ECO:0000269" key="6">
    <source>
    </source>
</evidence>
<evidence type="ECO:0000305" key="7"/>
<reference key="1">
    <citation type="journal article" date="2004" name="Eukaryot. Cell">
        <title>An ste20 homologue in Ustilago maydis plays a role in mating and pathogenicity.</title>
        <authorList>
            <person name="Smith D.G."/>
            <person name="Garcia-Pedrajas M.D."/>
            <person name="Hong W."/>
            <person name="Yu Z."/>
            <person name="Gold S.E."/>
            <person name="Perlin M.H."/>
        </authorList>
    </citation>
    <scope>NUCLEOTIDE SEQUENCE [GENOMIC DNA]</scope>
    <scope>FUNCTION</scope>
</reference>
<reference key="2">
    <citation type="journal article" date="2006" name="Nature">
        <title>Insights from the genome of the biotrophic fungal plant pathogen Ustilago maydis.</title>
        <authorList>
            <person name="Kaemper J."/>
            <person name="Kahmann R."/>
            <person name="Boelker M."/>
            <person name="Ma L.-J."/>
            <person name="Brefort T."/>
            <person name="Saville B.J."/>
            <person name="Banuett F."/>
            <person name="Kronstad J.W."/>
            <person name="Gold S.E."/>
            <person name="Mueller O."/>
            <person name="Perlin M.H."/>
            <person name="Woesten H.A.B."/>
            <person name="de Vries R."/>
            <person name="Ruiz-Herrera J."/>
            <person name="Reynaga-Pena C.G."/>
            <person name="Snetselaar K."/>
            <person name="McCann M."/>
            <person name="Perez-Martin J."/>
            <person name="Feldbruegge M."/>
            <person name="Basse C.W."/>
            <person name="Steinberg G."/>
            <person name="Ibeas J.I."/>
            <person name="Holloman W."/>
            <person name="Guzman P."/>
            <person name="Farman M.L."/>
            <person name="Stajich J.E."/>
            <person name="Sentandreu R."/>
            <person name="Gonzalez-Prieto J.M."/>
            <person name="Kennell J.C."/>
            <person name="Molina L."/>
            <person name="Schirawski J."/>
            <person name="Mendoza-Mendoza A."/>
            <person name="Greilinger D."/>
            <person name="Muench K."/>
            <person name="Roessel N."/>
            <person name="Scherer M."/>
            <person name="Vranes M."/>
            <person name="Ladendorf O."/>
            <person name="Vincon V."/>
            <person name="Fuchs U."/>
            <person name="Sandrock B."/>
            <person name="Meng S."/>
            <person name="Ho E.C.H."/>
            <person name="Cahill M.J."/>
            <person name="Boyce K.J."/>
            <person name="Klose J."/>
            <person name="Klosterman S.J."/>
            <person name="Deelstra H.J."/>
            <person name="Ortiz-Castellanos L."/>
            <person name="Li W."/>
            <person name="Sanchez-Alonso P."/>
            <person name="Schreier P.H."/>
            <person name="Haeuser-Hahn I."/>
            <person name="Vaupel M."/>
            <person name="Koopmann E."/>
            <person name="Friedrich G."/>
            <person name="Voss H."/>
            <person name="Schlueter T."/>
            <person name="Margolis J."/>
            <person name="Platt D."/>
            <person name="Swimmer C."/>
            <person name="Gnirke A."/>
            <person name="Chen F."/>
            <person name="Vysotskaia V."/>
            <person name="Mannhaupt G."/>
            <person name="Gueldener U."/>
            <person name="Muensterkoetter M."/>
            <person name="Haase D."/>
            <person name="Oesterheld M."/>
            <person name="Mewes H.-W."/>
            <person name="Mauceli E.W."/>
            <person name="DeCaprio D."/>
            <person name="Wade C.M."/>
            <person name="Butler J."/>
            <person name="Young S.K."/>
            <person name="Jaffe D.B."/>
            <person name="Calvo S.E."/>
            <person name="Nusbaum C."/>
            <person name="Galagan J.E."/>
            <person name="Birren B.W."/>
        </authorList>
    </citation>
    <scope>NUCLEOTIDE SEQUENCE [LARGE SCALE GENOMIC DNA]</scope>
    <source>
        <strain>DSM 14603 / FGSC 9021 / UM521</strain>
    </source>
</reference>
<reference key="3">
    <citation type="submission" date="2014-09" db="EMBL/GenBank/DDBJ databases">
        <authorList>
            <person name="Gueldener U."/>
            <person name="Muensterkoetter M."/>
            <person name="Walter M.C."/>
            <person name="Mannhaupt G."/>
            <person name="Kahmann R."/>
        </authorList>
    </citation>
    <scope>GENOME REANNOTATION</scope>
    <source>
        <strain>DSM 14603 / FGSC 9021 / UM521</strain>
    </source>
</reference>
<keyword id="KW-0067">ATP-binding</keyword>
<keyword id="KW-0963">Cytoplasm</keyword>
<keyword id="KW-0418">Kinase</keyword>
<keyword id="KW-0547">Nucleotide-binding</keyword>
<keyword id="KW-0539">Nucleus</keyword>
<keyword id="KW-0589">Pheromone response</keyword>
<keyword id="KW-1185">Reference proteome</keyword>
<keyword id="KW-0723">Serine/threonine-protein kinase</keyword>
<keyword id="KW-0808">Transferase</keyword>
<comment type="function">
    <text evidence="1 6">MAP4K component of the MAPK pathway required for the mating pheromone response and the regulation of cell polarity and cell cycle. Phosphorylates histone H2B to form H2BS10ph (By similarity).</text>
</comment>
<comment type="catalytic activity">
    <reaction>
        <text>L-seryl-[protein] + ATP = O-phospho-L-seryl-[protein] + ADP + H(+)</text>
        <dbReference type="Rhea" id="RHEA:17989"/>
        <dbReference type="Rhea" id="RHEA-COMP:9863"/>
        <dbReference type="Rhea" id="RHEA-COMP:11604"/>
        <dbReference type="ChEBI" id="CHEBI:15378"/>
        <dbReference type="ChEBI" id="CHEBI:29999"/>
        <dbReference type="ChEBI" id="CHEBI:30616"/>
        <dbReference type="ChEBI" id="CHEBI:83421"/>
        <dbReference type="ChEBI" id="CHEBI:456216"/>
        <dbReference type="EC" id="2.7.11.1"/>
    </reaction>
</comment>
<comment type="catalytic activity">
    <reaction>
        <text>L-threonyl-[protein] + ATP = O-phospho-L-threonyl-[protein] + ADP + H(+)</text>
        <dbReference type="Rhea" id="RHEA:46608"/>
        <dbReference type="Rhea" id="RHEA-COMP:11060"/>
        <dbReference type="Rhea" id="RHEA-COMP:11605"/>
        <dbReference type="ChEBI" id="CHEBI:15378"/>
        <dbReference type="ChEBI" id="CHEBI:30013"/>
        <dbReference type="ChEBI" id="CHEBI:30616"/>
        <dbReference type="ChEBI" id="CHEBI:61977"/>
        <dbReference type="ChEBI" id="CHEBI:456216"/>
        <dbReference type="EC" id="2.7.11.1"/>
    </reaction>
</comment>
<comment type="subcellular location">
    <subcellularLocation>
        <location evidence="1">Cytoplasm</location>
    </subcellularLocation>
    <subcellularLocation>
        <location evidence="1">Nucleus</location>
    </subcellularLocation>
</comment>
<comment type="similarity">
    <text evidence="7">Belongs to the protein kinase superfamily. STE Ser/Thr protein kinase family. STE20 subfamily.</text>
</comment>
<comment type="sequence caution" evidence="7">
    <conflict type="erroneous initiation">
        <sequence resource="EMBL-CDS" id="KIS67485"/>
    </conflict>
    <text>Extended N-terminus.</text>
</comment>
<proteinExistence type="inferred from homology"/>
<name>STE20_MYCMD</name>
<protein>
    <recommendedName>
        <fullName>Serine/threonine-protein kinase SMU1</fullName>
        <ecNumber>2.7.11.1</ecNumber>
    </recommendedName>
</protein>
<accession>Q4P5N0</accession>
<accession>A0A0D1DY77</accession>
<accession>Q8NK62</accession>